<keyword id="KW-0903">Direct protein sequencing</keyword>
<keyword id="KW-0378">Hydrolase</keyword>
<keyword id="KW-0964">Secreted</keyword>
<keyword id="KW-0732">Signal</keyword>
<accession>O05527</accession>
<sequence length="494" mass="51019">MAFNFIRAAAAGAAMALCGVGSVHAAVNLPALKIDKTQTTVSGLSSGGFMAVQLHVAYSATFAKGAGVVAGGPFYCAEGSIVNATGRCMASPAGIPTSTLVSTTNTWASQGVIDPVANLQNSKVYLFSGTLDSVVKTGVMDALRTYYNSFVPAANVVYKKDIAAEHAMVTDDYGNACSTKGAPYISDCNFDLAGAMLQHLYGTLNARNNATLPTGNYIEFNQSEFITNHGMATTGWAYVPQACQAGGTATCKLHVVLHGCKQNIGDVQQQYVRNTGYNRWADTNNIVMLYPQTSTAATNSCWDWWGYDSANYSKKSGPQMAAIKAMVDRVSSGTGGTTPPDPVALPAPTGVSTSGATASSMAIGWAAVMGAASYNVYRNANKVNALPVTATSYTDTGLAASTTYSWTVRAADANGAEGATSAAASGTTLAASGGGTATCTTASNYAHTLAGRAYAAGGYTYALGSNQNMGLWNVFVTNTLKQTSTNYYVIGTCP</sequence>
<protein>
    <recommendedName>
        <fullName evidence="5">Poly(3-hydroxybutyrate) depolymerase</fullName>
        <shortName evidence="3">P(3HB) depolymerase</shortName>
        <ecNumber evidence="2">3.1.1.75</ecNumber>
    </recommendedName>
    <alternativeName>
        <fullName evidence="3">Polyhydroxybutyrate depolymerase</fullName>
        <shortName evidence="3">PHB depolymerase</shortName>
    </alternativeName>
</protein>
<organism evidence="6">
    <name type="scientific">Delftia acidovorans</name>
    <name type="common">Pseudomonas acidovorans</name>
    <name type="synonym">Comamonas acidovorans</name>
    <dbReference type="NCBI Taxonomy" id="80866"/>
    <lineage>
        <taxon>Bacteria</taxon>
        <taxon>Pseudomonadati</taxon>
        <taxon>Pseudomonadota</taxon>
        <taxon>Betaproteobacteria</taxon>
        <taxon>Burkholderiales</taxon>
        <taxon>Comamonadaceae</taxon>
        <taxon>Delftia</taxon>
    </lineage>
</organism>
<feature type="signal peptide" evidence="2">
    <location>
        <begin position="1"/>
        <end position="25"/>
    </location>
</feature>
<feature type="chain" id="PRO_5004157688" description="Poly(3-hydroxybutyrate) depolymerase">
    <location>
        <begin position="26"/>
        <end position="494"/>
    </location>
</feature>
<feature type="domain" description="Fibronectin type-III" evidence="1">
    <location>
        <begin position="347"/>
        <end position="431"/>
    </location>
</feature>
<feature type="active site" description="Nucleophile" evidence="5">
    <location>
        <position position="45"/>
    </location>
</feature>
<feature type="active site" description="Charge relay system" evidence="5">
    <location>
        <position position="132"/>
    </location>
</feature>
<feature type="active site" description="Charge relay system" evidence="5">
    <location>
        <position position="166"/>
    </location>
</feature>
<gene>
    <name evidence="6" type="primary">phaZCac</name>
</gene>
<evidence type="ECO:0000255" key="1">
    <source>
        <dbReference type="PROSITE-ProRule" id="PRU00316"/>
    </source>
</evidence>
<evidence type="ECO:0000269" key="2">
    <source>
    </source>
</evidence>
<evidence type="ECO:0000303" key="3">
    <source>
    </source>
</evidence>
<evidence type="ECO:0000305" key="4"/>
<evidence type="ECO:0000305" key="5">
    <source>
    </source>
</evidence>
<evidence type="ECO:0000312" key="6">
    <source>
        <dbReference type="EMBL" id="BAA19791.1"/>
    </source>
</evidence>
<reference key="1">
    <citation type="journal article" date="1997" name="Appl. Environ. Microbiol.">
        <title>Biochemical and molecular characterization of the polyhydroxybutyrate depolymerase of Comamonas acidovorans YM1609, isolated from freshwater.</title>
        <authorList>
            <person name="Kasuya K."/>
            <person name="Inoue Y."/>
            <person name="Tanaka T."/>
            <person name="Akehata T."/>
            <person name="Iwata T."/>
            <person name="Fukui T."/>
            <person name="Doi Y."/>
        </authorList>
    </citation>
    <scope>NUCLEOTIDE SEQUENCE [GENOMIC DNA]</scope>
    <scope>PROTEIN SEQUENCE OF 26-45</scope>
    <scope>FUNCTION</scope>
    <scope>CATALYTIC ACTIVITY</scope>
    <scope>BIOPHYSICOCHEMICAL PROPERTIES</scope>
    <scope>SUBCELLULAR LOCATION</scope>
    <scope>INDUCTION</scope>
    <source>
        <strain>YM1609</strain>
    </source>
</reference>
<dbReference type="EC" id="3.1.1.75" evidence="2"/>
<dbReference type="EMBL" id="AB003186">
    <property type="protein sequence ID" value="BAA19791.1"/>
    <property type="molecule type" value="Genomic_DNA"/>
</dbReference>
<dbReference type="SMR" id="O05527"/>
<dbReference type="ESTHER" id="comac-PHAZCAC">
    <property type="family name" value="Esterase_phb_PHAZ"/>
</dbReference>
<dbReference type="GO" id="GO:0005576">
    <property type="term" value="C:extracellular region"/>
    <property type="evidence" value="ECO:0007669"/>
    <property type="project" value="UniProtKB-SubCell"/>
</dbReference>
<dbReference type="GO" id="GO:0016787">
    <property type="term" value="F:hydrolase activity"/>
    <property type="evidence" value="ECO:0007669"/>
    <property type="project" value="UniProtKB-KW"/>
</dbReference>
<dbReference type="CDD" id="cd00063">
    <property type="entry name" value="FN3"/>
    <property type="match status" value="1"/>
</dbReference>
<dbReference type="Gene3D" id="3.40.50.1820">
    <property type="entry name" value="alpha/beta hydrolase"/>
    <property type="match status" value="2"/>
</dbReference>
<dbReference type="Gene3D" id="2.60.40.10">
    <property type="entry name" value="Immunoglobulins"/>
    <property type="match status" value="1"/>
</dbReference>
<dbReference type="InterPro" id="IPR029058">
    <property type="entry name" value="AB_hydrolase_fold"/>
</dbReference>
<dbReference type="InterPro" id="IPR010126">
    <property type="entry name" value="Esterase_phb"/>
</dbReference>
<dbReference type="InterPro" id="IPR003961">
    <property type="entry name" value="FN3_dom"/>
</dbReference>
<dbReference type="InterPro" id="IPR036116">
    <property type="entry name" value="FN3_sf"/>
</dbReference>
<dbReference type="InterPro" id="IPR013783">
    <property type="entry name" value="Ig-like_fold"/>
</dbReference>
<dbReference type="PANTHER" id="PTHR42972:SF8">
    <property type="entry name" value="POLYHYDROXYBUTYRATE DEPOLYMERASE"/>
    <property type="match status" value="1"/>
</dbReference>
<dbReference type="PANTHER" id="PTHR42972">
    <property type="entry name" value="TOL-PAL SYSTEM PROTEIN TOLB"/>
    <property type="match status" value="1"/>
</dbReference>
<dbReference type="Pfam" id="PF10503">
    <property type="entry name" value="Esterase_PHB"/>
    <property type="match status" value="1"/>
</dbReference>
<dbReference type="Pfam" id="PF00041">
    <property type="entry name" value="fn3"/>
    <property type="match status" value="1"/>
</dbReference>
<dbReference type="SMART" id="SM00060">
    <property type="entry name" value="FN3"/>
    <property type="match status" value="1"/>
</dbReference>
<dbReference type="SUPFAM" id="SSF53474">
    <property type="entry name" value="alpha/beta-Hydrolases"/>
    <property type="match status" value="1"/>
</dbReference>
<dbReference type="SUPFAM" id="SSF49265">
    <property type="entry name" value="Fibronectin type III"/>
    <property type="match status" value="1"/>
</dbReference>
<dbReference type="PROSITE" id="PS50853">
    <property type="entry name" value="FN3"/>
    <property type="match status" value="1"/>
</dbReference>
<proteinExistence type="evidence at protein level"/>
<comment type="function">
    <text evidence="2">Catalyzes the hydrolysis of poly(3-hydroxybutyrate) (PHB) film, producing the monomer and dimer of 3-hydroxybutyrate (3HB), while the 3HB trimer and tetramer are not formed.</text>
</comment>
<comment type="catalytic activity">
    <reaction evidence="2">
        <text>[(3R)-hydroxybutanoate](n) + H2O = [(3R)-hydroxybutanoate](n-2) + (3R)-hydroxybutanoate dimer + H(+)</text>
        <dbReference type="Rhea" id="RHEA:56392"/>
        <dbReference type="Rhea" id="RHEA-COMP:14464"/>
        <dbReference type="Rhea" id="RHEA-COMP:14519"/>
        <dbReference type="ChEBI" id="CHEBI:8298"/>
        <dbReference type="ChEBI" id="CHEBI:10979"/>
        <dbReference type="ChEBI" id="CHEBI:15377"/>
        <dbReference type="ChEBI" id="CHEBI:15378"/>
        <dbReference type="EC" id="3.1.1.75"/>
    </reaction>
    <physiologicalReaction direction="left-to-right" evidence="5">
        <dbReference type="Rhea" id="RHEA:56393"/>
    </physiologicalReaction>
</comment>
<comment type="catalytic activity">
    <reaction evidence="2">
        <text>[(3R)-hydroxybutanoate](n) + H2O = [(3R)-hydroxybutanoate](n-1) + (R)-3-hydroxybutanoate + H(+)</text>
        <dbReference type="Rhea" id="RHEA:11248"/>
        <dbReference type="Rhea" id="RHEA-COMP:14464"/>
        <dbReference type="Rhea" id="RHEA-COMP:14518"/>
        <dbReference type="ChEBI" id="CHEBI:8298"/>
        <dbReference type="ChEBI" id="CHEBI:10983"/>
        <dbReference type="ChEBI" id="CHEBI:15377"/>
        <dbReference type="ChEBI" id="CHEBI:15378"/>
        <dbReference type="EC" id="3.1.1.75"/>
    </reaction>
    <physiologicalReaction direction="left-to-right" evidence="5">
        <dbReference type="Rhea" id="RHEA:11249"/>
    </physiologicalReaction>
</comment>
<comment type="catalytic activity">
    <reaction evidence="5">
        <text>(3R)-hydroxybutanoate dimer + H2O = 2 (R)-3-hydroxybutanoate + H(+)</text>
        <dbReference type="Rhea" id="RHEA:10172"/>
        <dbReference type="ChEBI" id="CHEBI:10979"/>
        <dbReference type="ChEBI" id="CHEBI:10983"/>
        <dbReference type="ChEBI" id="CHEBI:15377"/>
        <dbReference type="ChEBI" id="CHEBI:15378"/>
    </reaction>
    <physiologicalReaction direction="left-to-right" evidence="5">
        <dbReference type="Rhea" id="RHEA:10173"/>
    </physiologicalReaction>
</comment>
<comment type="biophysicochemical properties">
    <phDependence>
        <text evidence="2">Optimum pH is 9. Is stable for pH values from 6.0 to 10.0.</text>
    </phDependence>
    <temperatureDependence>
        <text evidence="2">Is stable at temperatures below 37 degrees Celsius. The stability of the enzyme decreases sharply at temperatures over 40 degrees Celsius.</text>
    </temperatureDependence>
</comment>
<comment type="subcellular location">
    <subcellularLocation>
        <location evidence="2">Secreted</location>
    </subcellularLocation>
</comment>
<comment type="induction">
    <text evidence="2">Induced upon growth on poly(3-hydroxybutyrate) or poly(3-hydroxybutyrate-co-3-hydroxyvalerate) as the sole carbon source.</text>
</comment>
<comment type="miscellaneous">
    <text evidence="5">Poly(3-hydroxybutyrate) (PHB), a homopolymer of (R)-3-hydroxybutyrate, is a storage material produced by some bacteria, that is used as sources of carbon and energy.</text>
</comment>
<comment type="similarity">
    <text evidence="4">Belongs to the AB hydrolase superfamily. Lipase family.</text>
</comment>
<name>PHB_DELAC</name>